<evidence type="ECO:0000255" key="1">
    <source>
        <dbReference type="PROSITE-ProRule" id="PRU00448"/>
    </source>
</evidence>
<evidence type="ECO:0000256" key="2">
    <source>
        <dbReference type="SAM" id="MobiDB-lite"/>
    </source>
</evidence>
<evidence type="ECO:0000269" key="3">
    <source>
    </source>
</evidence>
<evidence type="ECO:0000269" key="4">
    <source>
    </source>
</evidence>
<evidence type="ECO:0000269" key="5">
    <source>
    </source>
</evidence>
<evidence type="ECO:0000303" key="6">
    <source ref="5"/>
</evidence>
<evidence type="ECO:0000305" key="7"/>
<evidence type="ECO:0000312" key="8">
    <source>
        <dbReference type="Araport" id="AT1G76650"/>
    </source>
</evidence>
<evidence type="ECO:0000312" key="9">
    <source>
        <dbReference type="EMBL" id="AAF04447.1"/>
    </source>
</evidence>
<organism>
    <name type="scientific">Arabidopsis thaliana</name>
    <name type="common">Mouse-ear cress</name>
    <dbReference type="NCBI Taxonomy" id="3702"/>
    <lineage>
        <taxon>Eukaryota</taxon>
        <taxon>Viridiplantae</taxon>
        <taxon>Streptophyta</taxon>
        <taxon>Embryophyta</taxon>
        <taxon>Tracheophyta</taxon>
        <taxon>Spermatophyta</taxon>
        <taxon>Magnoliopsida</taxon>
        <taxon>eudicotyledons</taxon>
        <taxon>Gunneridae</taxon>
        <taxon>Pentapetalae</taxon>
        <taxon>rosids</taxon>
        <taxon>malvids</taxon>
        <taxon>Brassicales</taxon>
        <taxon>Brassicaceae</taxon>
        <taxon>Camelineae</taxon>
        <taxon>Arabidopsis</taxon>
    </lineage>
</organism>
<accession>Q9SRE6</accession>
<accession>A8MQS8</accession>
<accession>Q8LBV6</accession>
<keyword id="KW-0025">Alternative splicing</keyword>
<keyword id="KW-0106">Calcium</keyword>
<keyword id="KW-0479">Metal-binding</keyword>
<keyword id="KW-1185">Reference proteome</keyword>
<keyword id="KW-0677">Repeat</keyword>
<gene>
    <name evidence="6" type="primary">CML38</name>
    <name evidence="8" type="ordered locus">At1g76650</name>
    <name evidence="9" type="ORF">F28O16.2</name>
</gene>
<name>CML38_ARATH</name>
<sequence length="177" mass="20113">MKNNTQPQSSFKKLCRKLSPKREDSAGEIQQHNSSNGEDKNRELEAVFSYMDANRDGRISPEELQKSFMTLGEQLSDEEAVAAVRLSDTDGDGMLDFEEFSQLIKVDDEEEKKMELKGAFRLYIAEGEDCITPRSLKMMLKKLGESRTTDDCRVMISAFDLNADGVLSFDEFALMMR</sequence>
<proteinExistence type="evidence at protein level"/>
<protein>
    <recommendedName>
        <fullName evidence="6">Calcium-binding protein CML38</fullName>
    </recommendedName>
    <alternativeName>
        <fullName evidence="6">Calmodulin-like protein 38</fullName>
    </alternativeName>
</protein>
<comment type="function">
    <text evidence="4">Potential calcium sensor that binds calcium in vitro.</text>
</comment>
<comment type="subunit">
    <text evidence="5">Binds to ABCG36.</text>
</comment>
<comment type="alternative products">
    <event type="alternative splicing"/>
    <isoform>
        <id>Q9SRE6-1</id>
        <name>1</name>
        <sequence type="displayed"/>
    </isoform>
    <isoform>
        <id>Q9SRE6-2</id>
        <name>2</name>
        <sequence type="described" ref="VSP_034554"/>
    </isoform>
</comment>
<comment type="tissue specificity">
    <text evidence="4">Expressed in cotyledons and guard cells of young leaves. In mature root, expressed in the epidermis, trichoblasts, young lateral root and root tip. Expressed from stage 9 to 15 of flower development in anther wall.</text>
</comment>
<comment type="induction">
    <text evidence="3 4">By touch, salt and hydrogen peroxide treatments, drought stress, wounding, dark and infection by the bacterial pathogen P.syringae.</text>
</comment>
<comment type="caution">
    <text evidence="7">Although assigned as a calmodulin family member by Ref.5, it only contains EF-hand domains.</text>
</comment>
<reference key="1">
    <citation type="journal article" date="2000" name="Nature">
        <title>Sequence and analysis of chromosome 1 of the plant Arabidopsis thaliana.</title>
        <authorList>
            <person name="Theologis A."/>
            <person name="Ecker J.R."/>
            <person name="Palm C.J."/>
            <person name="Federspiel N.A."/>
            <person name="Kaul S."/>
            <person name="White O."/>
            <person name="Alonso J."/>
            <person name="Altafi H."/>
            <person name="Araujo R."/>
            <person name="Bowman C.L."/>
            <person name="Brooks S.Y."/>
            <person name="Buehler E."/>
            <person name="Chan A."/>
            <person name="Chao Q."/>
            <person name="Chen H."/>
            <person name="Cheuk R.F."/>
            <person name="Chin C.W."/>
            <person name="Chung M.K."/>
            <person name="Conn L."/>
            <person name="Conway A.B."/>
            <person name="Conway A.R."/>
            <person name="Creasy T.H."/>
            <person name="Dewar K."/>
            <person name="Dunn P."/>
            <person name="Etgu P."/>
            <person name="Feldblyum T.V."/>
            <person name="Feng J.-D."/>
            <person name="Fong B."/>
            <person name="Fujii C.Y."/>
            <person name="Gill J.E."/>
            <person name="Goldsmith A.D."/>
            <person name="Haas B."/>
            <person name="Hansen N.F."/>
            <person name="Hughes B."/>
            <person name="Huizar L."/>
            <person name="Hunter J.L."/>
            <person name="Jenkins J."/>
            <person name="Johnson-Hopson C."/>
            <person name="Khan S."/>
            <person name="Khaykin E."/>
            <person name="Kim C.J."/>
            <person name="Koo H.L."/>
            <person name="Kremenetskaia I."/>
            <person name="Kurtz D.B."/>
            <person name="Kwan A."/>
            <person name="Lam B."/>
            <person name="Langin-Hooper S."/>
            <person name="Lee A."/>
            <person name="Lee J.M."/>
            <person name="Lenz C.A."/>
            <person name="Li J.H."/>
            <person name="Li Y.-P."/>
            <person name="Lin X."/>
            <person name="Liu S.X."/>
            <person name="Liu Z.A."/>
            <person name="Luros J.S."/>
            <person name="Maiti R."/>
            <person name="Marziali A."/>
            <person name="Militscher J."/>
            <person name="Miranda M."/>
            <person name="Nguyen M."/>
            <person name="Nierman W.C."/>
            <person name="Osborne B.I."/>
            <person name="Pai G."/>
            <person name="Peterson J."/>
            <person name="Pham P.K."/>
            <person name="Rizzo M."/>
            <person name="Rooney T."/>
            <person name="Rowley D."/>
            <person name="Sakano H."/>
            <person name="Salzberg S.L."/>
            <person name="Schwartz J.R."/>
            <person name="Shinn P."/>
            <person name="Southwick A.M."/>
            <person name="Sun H."/>
            <person name="Tallon L.J."/>
            <person name="Tambunga G."/>
            <person name="Toriumi M.J."/>
            <person name="Town C.D."/>
            <person name="Utterback T."/>
            <person name="Van Aken S."/>
            <person name="Vaysberg M."/>
            <person name="Vysotskaia V.S."/>
            <person name="Walker M."/>
            <person name="Wu D."/>
            <person name="Yu G."/>
            <person name="Fraser C.M."/>
            <person name="Venter J.C."/>
            <person name="Davis R.W."/>
        </authorList>
    </citation>
    <scope>NUCLEOTIDE SEQUENCE [LARGE SCALE GENOMIC DNA]</scope>
    <source>
        <strain>cv. Columbia</strain>
    </source>
</reference>
<reference key="2">
    <citation type="journal article" date="2017" name="Plant J.">
        <title>Araport11: a complete reannotation of the Arabidopsis thaliana reference genome.</title>
        <authorList>
            <person name="Cheng C.Y."/>
            <person name="Krishnakumar V."/>
            <person name="Chan A.P."/>
            <person name="Thibaud-Nissen F."/>
            <person name="Schobel S."/>
            <person name="Town C.D."/>
        </authorList>
    </citation>
    <scope>GENOME REANNOTATION</scope>
    <source>
        <strain>cv. Columbia</strain>
    </source>
</reference>
<reference key="3">
    <citation type="journal article" date="2003" name="Science">
        <title>Empirical analysis of transcriptional activity in the Arabidopsis genome.</title>
        <authorList>
            <person name="Yamada K."/>
            <person name="Lim J."/>
            <person name="Dale J.M."/>
            <person name="Chen H."/>
            <person name="Shinn P."/>
            <person name="Palm C.J."/>
            <person name="Southwick A.M."/>
            <person name="Wu H.C."/>
            <person name="Kim C.J."/>
            <person name="Nguyen M."/>
            <person name="Pham P.K."/>
            <person name="Cheuk R.F."/>
            <person name="Karlin-Newmann G."/>
            <person name="Liu S.X."/>
            <person name="Lam B."/>
            <person name="Sakano H."/>
            <person name="Wu T."/>
            <person name="Yu G."/>
            <person name="Miranda M."/>
            <person name="Quach H.L."/>
            <person name="Tripp M."/>
            <person name="Chang C.H."/>
            <person name="Lee J.M."/>
            <person name="Toriumi M.J."/>
            <person name="Chan M.M."/>
            <person name="Tang C.C."/>
            <person name="Onodera C.S."/>
            <person name="Deng J.M."/>
            <person name="Akiyama K."/>
            <person name="Ansari Y."/>
            <person name="Arakawa T."/>
            <person name="Banh J."/>
            <person name="Banno F."/>
            <person name="Bowser L."/>
            <person name="Brooks S.Y."/>
            <person name="Carninci P."/>
            <person name="Chao Q."/>
            <person name="Choy N."/>
            <person name="Enju A."/>
            <person name="Goldsmith A.D."/>
            <person name="Gurjal M."/>
            <person name="Hansen N.F."/>
            <person name="Hayashizaki Y."/>
            <person name="Johnson-Hopson C."/>
            <person name="Hsuan V.W."/>
            <person name="Iida K."/>
            <person name="Karnes M."/>
            <person name="Khan S."/>
            <person name="Koesema E."/>
            <person name="Ishida J."/>
            <person name="Jiang P.X."/>
            <person name="Jones T."/>
            <person name="Kawai J."/>
            <person name="Kamiya A."/>
            <person name="Meyers C."/>
            <person name="Nakajima M."/>
            <person name="Narusaka M."/>
            <person name="Seki M."/>
            <person name="Sakurai T."/>
            <person name="Satou M."/>
            <person name="Tamse R."/>
            <person name="Vaysberg M."/>
            <person name="Wallender E.K."/>
            <person name="Wong C."/>
            <person name="Yamamura Y."/>
            <person name="Yuan S."/>
            <person name="Shinozaki K."/>
            <person name="Davis R.W."/>
            <person name="Theologis A."/>
            <person name="Ecker J.R."/>
        </authorList>
    </citation>
    <scope>NUCLEOTIDE SEQUENCE [LARGE SCALE MRNA] (ISOFORM 1)</scope>
    <source>
        <strain>cv. Columbia</strain>
    </source>
</reference>
<reference key="4">
    <citation type="submission" date="2002-03" db="EMBL/GenBank/DDBJ databases">
        <title>Full-length cDNA from Arabidopsis thaliana.</title>
        <authorList>
            <person name="Brover V.V."/>
            <person name="Troukhan M.E."/>
            <person name="Alexandrov N.A."/>
            <person name="Lu Y.-P."/>
            <person name="Flavell R.B."/>
            <person name="Feldmann K.A."/>
        </authorList>
    </citation>
    <scope>NUCLEOTIDE SEQUENCE [LARGE SCALE MRNA] (ISOFORM 1)</scope>
</reference>
<reference key="5">
    <citation type="journal article" date="2003" name="New Phytol.">
        <title>Calmodulins and related potential calcium sensors of Arabidopsis.</title>
        <authorList>
            <person name="McCormack E."/>
            <person name="Braam J."/>
        </authorList>
    </citation>
    <scope>GENE FAMILY</scope>
    <scope>NOMENCLATURE</scope>
</reference>
<reference key="6">
    <citation type="journal article" date="2005" name="New Phytol.">
        <title>Genome-wide identification of touch- and darkness-regulated Arabidopsis genes: a focus on calmodulin-like and XTH genes.</title>
        <authorList>
            <person name="Lee D."/>
            <person name="Polisensky D.H."/>
            <person name="Braam J."/>
        </authorList>
    </citation>
    <scope>INDUCTION</scope>
</reference>
<reference key="7">
    <citation type="journal article" date="2007" name="Plant Mol. Biol.">
        <title>Developmental and stimulus-induced expression patterns of Arabidopsis calmodulin-like genes CML37, CML38 and CML39.</title>
        <authorList>
            <person name="Vanderbeld B."/>
            <person name="Snedden W.A."/>
        </authorList>
    </citation>
    <scope>FUNCTION</scope>
    <scope>TISSUE SPECIFICITY</scope>
    <scope>INDUCTION</scope>
</reference>
<reference key="8">
    <citation type="journal article" date="2016" name="New Phytol.">
        <title>ABC transporter PEN3/PDR8/ABCG36 interacts with calmodulin that, like PEN3, is required for Arabidopsis nonhost resistance.</title>
        <authorList>
            <person name="Campe R."/>
            <person name="Langenbach C."/>
            <person name="Leissing F."/>
            <person name="Popescu G.V."/>
            <person name="Popescu S.C."/>
            <person name="Goellner K."/>
            <person name="Beckers G.J."/>
            <person name="Conrath U."/>
        </authorList>
    </citation>
    <scope>INTERACTION WITH ABCG36</scope>
    <source>
        <strain>cv. Columbia</strain>
    </source>
</reference>
<feature type="chain" id="PRO_0000342962" description="Calcium-binding protein CML38">
    <location>
        <begin position="1"/>
        <end position="177"/>
    </location>
</feature>
<feature type="domain" description="EF-hand 1" evidence="1">
    <location>
        <begin position="39"/>
        <end position="74"/>
    </location>
</feature>
<feature type="domain" description="EF-hand 2" evidence="1">
    <location>
        <begin position="75"/>
        <end position="110"/>
    </location>
</feature>
<feature type="domain" description="EF-hand 3" evidence="1">
    <location>
        <begin position="111"/>
        <end position="146"/>
    </location>
</feature>
<feature type="domain" description="EF-hand 4" evidence="1">
    <location>
        <begin position="147"/>
        <end position="177"/>
    </location>
</feature>
<feature type="region of interest" description="Disordered" evidence="2">
    <location>
        <begin position="1"/>
        <end position="44"/>
    </location>
</feature>
<feature type="compositionally biased region" description="Polar residues" evidence="2">
    <location>
        <begin position="1"/>
        <end position="11"/>
    </location>
</feature>
<feature type="binding site" evidence="1">
    <location>
        <position position="52"/>
    </location>
    <ligand>
        <name>Ca(2+)</name>
        <dbReference type="ChEBI" id="CHEBI:29108"/>
        <label>1</label>
    </ligand>
</feature>
<feature type="binding site" evidence="1">
    <location>
        <position position="54"/>
    </location>
    <ligand>
        <name>Ca(2+)</name>
        <dbReference type="ChEBI" id="CHEBI:29108"/>
        <label>1</label>
    </ligand>
</feature>
<feature type="binding site" evidence="1">
    <location>
        <position position="56"/>
    </location>
    <ligand>
        <name>Ca(2+)</name>
        <dbReference type="ChEBI" id="CHEBI:29108"/>
        <label>1</label>
    </ligand>
</feature>
<feature type="binding site" evidence="1">
    <location>
        <position position="58"/>
    </location>
    <ligand>
        <name>Ca(2+)</name>
        <dbReference type="ChEBI" id="CHEBI:29108"/>
        <label>1</label>
    </ligand>
</feature>
<feature type="binding site" evidence="1">
    <location>
        <position position="63"/>
    </location>
    <ligand>
        <name>Ca(2+)</name>
        <dbReference type="ChEBI" id="CHEBI:29108"/>
        <label>1</label>
    </ligand>
</feature>
<feature type="binding site" evidence="1">
    <location>
        <position position="88"/>
    </location>
    <ligand>
        <name>Ca(2+)</name>
        <dbReference type="ChEBI" id="CHEBI:29108"/>
        <label>2</label>
    </ligand>
</feature>
<feature type="binding site" evidence="1">
    <location>
        <position position="90"/>
    </location>
    <ligand>
        <name>Ca(2+)</name>
        <dbReference type="ChEBI" id="CHEBI:29108"/>
        <label>2</label>
    </ligand>
</feature>
<feature type="binding site" evidence="1">
    <location>
        <position position="92"/>
    </location>
    <ligand>
        <name>Ca(2+)</name>
        <dbReference type="ChEBI" id="CHEBI:29108"/>
        <label>2</label>
    </ligand>
</feature>
<feature type="binding site" evidence="1">
    <location>
        <position position="94"/>
    </location>
    <ligand>
        <name>Ca(2+)</name>
        <dbReference type="ChEBI" id="CHEBI:29108"/>
        <label>2</label>
    </ligand>
</feature>
<feature type="binding site" evidence="1">
    <location>
        <position position="99"/>
    </location>
    <ligand>
        <name>Ca(2+)</name>
        <dbReference type="ChEBI" id="CHEBI:29108"/>
        <label>2</label>
    </ligand>
</feature>
<feature type="binding site" evidence="1">
    <location>
        <position position="160"/>
    </location>
    <ligand>
        <name>Ca(2+)</name>
        <dbReference type="ChEBI" id="CHEBI:29108"/>
        <label>3</label>
    </ligand>
</feature>
<feature type="binding site" evidence="1">
    <location>
        <position position="162"/>
    </location>
    <ligand>
        <name>Ca(2+)</name>
        <dbReference type="ChEBI" id="CHEBI:29108"/>
        <label>3</label>
    </ligand>
</feature>
<feature type="binding site" evidence="1">
    <location>
        <position position="164"/>
    </location>
    <ligand>
        <name>Ca(2+)</name>
        <dbReference type="ChEBI" id="CHEBI:29108"/>
        <label>3</label>
    </ligand>
</feature>
<feature type="binding site" evidence="1">
    <location>
        <position position="171"/>
    </location>
    <ligand>
        <name>Ca(2+)</name>
        <dbReference type="ChEBI" id="CHEBI:29108"/>
        <label>3</label>
    </ligand>
</feature>
<feature type="splice variant" id="VSP_034554" description="In isoform 2." evidence="7">
    <location>
        <begin position="76"/>
        <end position="85"/>
    </location>
</feature>
<feature type="sequence conflict" description="In Ref. 4; AAM64535." evidence="7" ref="4">
    <original>E</original>
    <variation>K</variation>
    <location>
        <position position="23"/>
    </location>
</feature>
<feature type="sequence conflict" description="In Ref. 4; AAM64535." evidence="7" ref="4">
    <original>A</original>
    <variation>T</variation>
    <location>
        <position position="125"/>
    </location>
</feature>
<dbReference type="EMBL" id="AC010718">
    <property type="protein sequence ID" value="AAF04447.1"/>
    <property type="molecule type" value="Genomic_DNA"/>
</dbReference>
<dbReference type="EMBL" id="CP002684">
    <property type="protein sequence ID" value="AEE35869.1"/>
    <property type="molecule type" value="Genomic_DNA"/>
</dbReference>
<dbReference type="EMBL" id="CP002684">
    <property type="protein sequence ID" value="AEE35870.1"/>
    <property type="molecule type" value="Genomic_DNA"/>
</dbReference>
<dbReference type="EMBL" id="CP002684">
    <property type="protein sequence ID" value="AEE35871.1"/>
    <property type="molecule type" value="Genomic_DNA"/>
</dbReference>
<dbReference type="EMBL" id="BT002421">
    <property type="protein sequence ID" value="AAO00781.1"/>
    <property type="molecule type" value="mRNA"/>
</dbReference>
<dbReference type="EMBL" id="BT006556">
    <property type="protein sequence ID" value="AAP21364.1"/>
    <property type="molecule type" value="mRNA"/>
</dbReference>
<dbReference type="EMBL" id="AY086972">
    <property type="protein sequence ID" value="AAM64535.1"/>
    <property type="molecule type" value="mRNA"/>
</dbReference>
<dbReference type="PIR" id="G96794">
    <property type="entry name" value="G96794"/>
</dbReference>
<dbReference type="RefSeq" id="NP_001077834.1">
    <molecule id="Q9SRE6-2"/>
    <property type="nucleotide sequence ID" value="NM_001084365.1"/>
</dbReference>
<dbReference type="RefSeq" id="NP_001185413.1">
    <molecule id="Q9SRE6-1"/>
    <property type="nucleotide sequence ID" value="NM_001198484.1"/>
</dbReference>
<dbReference type="RefSeq" id="NP_177791.1">
    <molecule id="Q9SRE6-1"/>
    <property type="nucleotide sequence ID" value="NM_106315.3"/>
</dbReference>
<dbReference type="SMR" id="Q9SRE6"/>
<dbReference type="BioGRID" id="29217">
    <property type="interactions" value="2"/>
</dbReference>
<dbReference type="FunCoup" id="Q9SRE6">
    <property type="interactions" value="204"/>
</dbReference>
<dbReference type="STRING" id="3702.Q9SRE6"/>
<dbReference type="iPTMnet" id="Q9SRE6"/>
<dbReference type="PaxDb" id="3702-AT1G76650.1"/>
<dbReference type="ProteomicsDB" id="241050">
    <molecule id="Q9SRE6-1"/>
</dbReference>
<dbReference type="EnsemblPlants" id="AT1G76650.1">
    <molecule id="Q9SRE6-1"/>
    <property type="protein sequence ID" value="AT1G76650.1"/>
    <property type="gene ID" value="AT1G76650"/>
</dbReference>
<dbReference type="EnsemblPlants" id="AT1G76650.2">
    <molecule id="Q9SRE6-2"/>
    <property type="protein sequence ID" value="AT1G76650.2"/>
    <property type="gene ID" value="AT1G76650"/>
</dbReference>
<dbReference type="EnsemblPlants" id="AT1G76650.3">
    <molecule id="Q9SRE6-1"/>
    <property type="protein sequence ID" value="AT1G76650.3"/>
    <property type="gene ID" value="AT1G76650"/>
</dbReference>
<dbReference type="GeneID" id="843998"/>
<dbReference type="Gramene" id="AT1G76650.1">
    <molecule id="Q9SRE6-1"/>
    <property type="protein sequence ID" value="AT1G76650.1"/>
    <property type="gene ID" value="AT1G76650"/>
</dbReference>
<dbReference type="Gramene" id="AT1G76650.2">
    <molecule id="Q9SRE6-2"/>
    <property type="protein sequence ID" value="AT1G76650.2"/>
    <property type="gene ID" value="AT1G76650"/>
</dbReference>
<dbReference type="Gramene" id="AT1G76650.3">
    <molecule id="Q9SRE6-1"/>
    <property type="protein sequence ID" value="AT1G76650.3"/>
    <property type="gene ID" value="AT1G76650"/>
</dbReference>
<dbReference type="KEGG" id="ath:AT1G76650"/>
<dbReference type="Araport" id="AT1G76650"/>
<dbReference type="TAIR" id="AT1G76650">
    <property type="gene designation" value="CML38"/>
</dbReference>
<dbReference type="eggNOG" id="KOG0027">
    <property type="taxonomic scope" value="Eukaryota"/>
</dbReference>
<dbReference type="InParanoid" id="Q9SRE6"/>
<dbReference type="OMA" id="CKTMIAQ"/>
<dbReference type="PhylomeDB" id="Q9SRE6"/>
<dbReference type="CD-CODE" id="24475C75">
    <property type="entry name" value="Stress granule"/>
</dbReference>
<dbReference type="PRO" id="PR:Q9SRE6"/>
<dbReference type="Proteomes" id="UP000006548">
    <property type="component" value="Chromosome 1"/>
</dbReference>
<dbReference type="ExpressionAtlas" id="Q9SRE6">
    <property type="expression patterns" value="baseline and differential"/>
</dbReference>
<dbReference type="GO" id="GO:0005509">
    <property type="term" value="F:calcium ion binding"/>
    <property type="evidence" value="ECO:0000314"/>
    <property type="project" value="TAIR"/>
</dbReference>
<dbReference type="GO" id="GO:0071456">
    <property type="term" value="P:cellular response to hypoxia"/>
    <property type="evidence" value="ECO:0007007"/>
    <property type="project" value="TAIR"/>
</dbReference>
<dbReference type="GO" id="GO:0009611">
    <property type="term" value="P:response to wounding"/>
    <property type="evidence" value="ECO:0000270"/>
    <property type="project" value="TAIR"/>
</dbReference>
<dbReference type="CDD" id="cd00051">
    <property type="entry name" value="EFh"/>
    <property type="match status" value="1"/>
</dbReference>
<dbReference type="FunFam" id="1.10.238.10:FF:000237">
    <property type="entry name" value="Calcium-binding protein CML38"/>
    <property type="match status" value="1"/>
</dbReference>
<dbReference type="FunFam" id="1.10.238.10:FF:000647">
    <property type="entry name" value="Calcium-binding protein CML38"/>
    <property type="match status" value="1"/>
</dbReference>
<dbReference type="Gene3D" id="1.10.238.10">
    <property type="entry name" value="EF-hand"/>
    <property type="match status" value="2"/>
</dbReference>
<dbReference type="InterPro" id="IPR050145">
    <property type="entry name" value="Centrin_CML-like"/>
</dbReference>
<dbReference type="InterPro" id="IPR011992">
    <property type="entry name" value="EF-hand-dom_pair"/>
</dbReference>
<dbReference type="InterPro" id="IPR018247">
    <property type="entry name" value="EF_Hand_1_Ca_BS"/>
</dbReference>
<dbReference type="InterPro" id="IPR002048">
    <property type="entry name" value="EF_hand_dom"/>
</dbReference>
<dbReference type="PANTHER" id="PTHR23050">
    <property type="entry name" value="CALCIUM BINDING PROTEIN"/>
    <property type="match status" value="1"/>
</dbReference>
<dbReference type="Pfam" id="PF13499">
    <property type="entry name" value="EF-hand_7"/>
    <property type="match status" value="1"/>
</dbReference>
<dbReference type="Pfam" id="PF13833">
    <property type="entry name" value="EF-hand_8"/>
    <property type="match status" value="1"/>
</dbReference>
<dbReference type="SMART" id="SM00054">
    <property type="entry name" value="EFh"/>
    <property type="match status" value="4"/>
</dbReference>
<dbReference type="SUPFAM" id="SSF47473">
    <property type="entry name" value="EF-hand"/>
    <property type="match status" value="1"/>
</dbReference>
<dbReference type="PROSITE" id="PS00018">
    <property type="entry name" value="EF_HAND_1"/>
    <property type="match status" value="3"/>
</dbReference>
<dbReference type="PROSITE" id="PS50222">
    <property type="entry name" value="EF_HAND_2"/>
    <property type="match status" value="4"/>
</dbReference>